<keyword id="KW-0963">Cytoplasm</keyword>
<keyword id="KW-0479">Metal-binding</keyword>
<keyword id="KW-0862">Zinc</keyword>
<gene>
    <name type="ordered locus">SACOL2052</name>
</gene>
<organism>
    <name type="scientific">Staphylococcus aureus (strain COL)</name>
    <dbReference type="NCBI Taxonomy" id="93062"/>
    <lineage>
        <taxon>Bacteria</taxon>
        <taxon>Bacillati</taxon>
        <taxon>Bacillota</taxon>
        <taxon>Bacilli</taxon>
        <taxon>Bacillales</taxon>
        <taxon>Staphylococcaceae</taxon>
        <taxon>Staphylococcus</taxon>
    </lineage>
</organism>
<reference key="1">
    <citation type="journal article" date="2005" name="J. Bacteriol.">
        <title>Insights on evolution of virulence and resistance from the complete genome analysis of an early methicillin-resistant Staphylococcus aureus strain and a biofilm-producing methicillin-resistant Staphylococcus epidermidis strain.</title>
        <authorList>
            <person name="Gill S.R."/>
            <person name="Fouts D.E."/>
            <person name="Archer G.L."/>
            <person name="Mongodin E.F."/>
            <person name="DeBoy R.T."/>
            <person name="Ravel J."/>
            <person name="Paulsen I.T."/>
            <person name="Kolonay J.F."/>
            <person name="Brinkac L.M."/>
            <person name="Beanan M.J."/>
            <person name="Dodson R.J."/>
            <person name="Daugherty S.C."/>
            <person name="Madupu R."/>
            <person name="Angiuoli S.V."/>
            <person name="Durkin A.S."/>
            <person name="Haft D.H."/>
            <person name="Vamathevan J.J."/>
            <person name="Khouri H."/>
            <person name="Utterback T.R."/>
            <person name="Lee C."/>
            <person name="Dimitrov G."/>
            <person name="Jiang L."/>
            <person name="Qin H."/>
            <person name="Weidman J."/>
            <person name="Tran K."/>
            <person name="Kang K.H."/>
            <person name="Hance I.R."/>
            <person name="Nelson K.E."/>
            <person name="Fraser C.M."/>
        </authorList>
    </citation>
    <scope>NUCLEOTIDE SEQUENCE [LARGE SCALE GENOMIC DNA]</scope>
    <source>
        <strain>COL</strain>
    </source>
</reference>
<protein>
    <recommendedName>
        <fullName evidence="1">Protein SprT-like</fullName>
    </recommendedName>
</protein>
<dbReference type="EMBL" id="CP000046">
    <property type="protein sequence ID" value="AAW37014.1"/>
    <property type="molecule type" value="Genomic_DNA"/>
</dbReference>
<dbReference type="RefSeq" id="WP_001058111.1">
    <property type="nucleotide sequence ID" value="NZ_JBGOFO010000007.1"/>
</dbReference>
<dbReference type="KEGG" id="sac:SACOL2052"/>
<dbReference type="HOGENOM" id="CLU_123820_0_0_9"/>
<dbReference type="Proteomes" id="UP000000530">
    <property type="component" value="Chromosome"/>
</dbReference>
<dbReference type="GO" id="GO:0005737">
    <property type="term" value="C:cytoplasm"/>
    <property type="evidence" value="ECO:0007669"/>
    <property type="project" value="UniProtKB-SubCell"/>
</dbReference>
<dbReference type="GO" id="GO:0008270">
    <property type="term" value="F:zinc ion binding"/>
    <property type="evidence" value="ECO:0007669"/>
    <property type="project" value="UniProtKB-UniRule"/>
</dbReference>
<dbReference type="GO" id="GO:0006950">
    <property type="term" value="P:response to stress"/>
    <property type="evidence" value="ECO:0007669"/>
    <property type="project" value="UniProtKB-ARBA"/>
</dbReference>
<dbReference type="HAMAP" id="MF_00745">
    <property type="entry name" value="SprT_like"/>
    <property type="match status" value="1"/>
</dbReference>
<dbReference type="InterPro" id="IPR006640">
    <property type="entry name" value="SprT-like_domain"/>
</dbReference>
<dbReference type="InterPro" id="IPR035240">
    <property type="entry name" value="SprT_Zn_ribbon"/>
</dbReference>
<dbReference type="InterPro" id="IPR023524">
    <property type="entry name" value="Uncharacterised_SprT-like"/>
</dbReference>
<dbReference type="NCBIfam" id="NF003339">
    <property type="entry name" value="PRK04351.1"/>
    <property type="match status" value="1"/>
</dbReference>
<dbReference type="Pfam" id="PF10263">
    <property type="entry name" value="SprT-like"/>
    <property type="match status" value="1"/>
</dbReference>
<dbReference type="Pfam" id="PF17283">
    <property type="entry name" value="Zn_ribbon_SprT"/>
    <property type="match status" value="1"/>
</dbReference>
<dbReference type="SMART" id="SM00731">
    <property type="entry name" value="SprT"/>
    <property type="match status" value="1"/>
</dbReference>
<accession>Q5HED9</accession>
<name>SPRTL_STAAC</name>
<proteinExistence type="inferred from homology"/>
<sequence>MNNDKLQRMVENLSEEKFGRTFRHCAYFNKRLRTTGGRYLLKSHDIEINPKQYEHYGEDAVVKIILHELCHYHLHIAGKGYQHKDQDFKRLSQQVGAPRFCNSIESYQQRANYEYYCTKCHAKYIRIRKVDTNRMRCGHCNGKLRMKRQLK</sequence>
<evidence type="ECO:0000255" key="1">
    <source>
        <dbReference type="HAMAP-Rule" id="MF_00745"/>
    </source>
</evidence>
<feature type="chain" id="PRO_0000213296" description="Protein SprT-like">
    <location>
        <begin position="1"/>
        <end position="151"/>
    </location>
</feature>
<feature type="domain" description="SprT-like" evidence="1">
    <location>
        <begin position="6"/>
        <end position="147"/>
    </location>
</feature>
<feature type="active site" evidence="1">
    <location>
        <position position="68"/>
    </location>
</feature>
<feature type="binding site" evidence="1">
    <location>
        <position position="67"/>
    </location>
    <ligand>
        <name>Zn(2+)</name>
        <dbReference type="ChEBI" id="CHEBI:29105"/>
    </ligand>
</feature>
<feature type="binding site" evidence="1">
    <location>
        <position position="71"/>
    </location>
    <ligand>
        <name>Zn(2+)</name>
        <dbReference type="ChEBI" id="CHEBI:29105"/>
    </ligand>
</feature>
<comment type="cofactor">
    <cofactor evidence="1">
        <name>Zn(2+)</name>
        <dbReference type="ChEBI" id="CHEBI:29105"/>
    </cofactor>
    <text evidence="1">Binds 1 zinc ion.</text>
</comment>
<comment type="subcellular location">
    <subcellularLocation>
        <location evidence="1">Cytoplasm</location>
    </subcellularLocation>
</comment>
<comment type="similarity">
    <text evidence="1">Belongs to the SprT family.</text>
</comment>